<dbReference type="EC" id="6.3.1.21" evidence="1"/>
<dbReference type="EMBL" id="CP000026">
    <property type="protein sequence ID" value="AAV76961.1"/>
    <property type="molecule type" value="Genomic_DNA"/>
</dbReference>
<dbReference type="RefSeq" id="WP_000173426.1">
    <property type="nucleotide sequence ID" value="NC_006511.1"/>
</dbReference>
<dbReference type="SMR" id="Q5PIA0"/>
<dbReference type="KEGG" id="spt:SPA0986"/>
<dbReference type="HOGENOM" id="CLU_011534_1_3_6"/>
<dbReference type="UniPathway" id="UPA00074">
    <property type="reaction ID" value="UER00127"/>
</dbReference>
<dbReference type="Proteomes" id="UP000008185">
    <property type="component" value="Chromosome"/>
</dbReference>
<dbReference type="GO" id="GO:0005829">
    <property type="term" value="C:cytosol"/>
    <property type="evidence" value="ECO:0007669"/>
    <property type="project" value="TreeGrafter"/>
</dbReference>
<dbReference type="GO" id="GO:0005524">
    <property type="term" value="F:ATP binding"/>
    <property type="evidence" value="ECO:0007669"/>
    <property type="project" value="UniProtKB-UniRule"/>
</dbReference>
<dbReference type="GO" id="GO:0000287">
    <property type="term" value="F:magnesium ion binding"/>
    <property type="evidence" value="ECO:0007669"/>
    <property type="project" value="InterPro"/>
</dbReference>
<dbReference type="GO" id="GO:0043815">
    <property type="term" value="F:phosphoribosylglycinamide formyltransferase 2 activity"/>
    <property type="evidence" value="ECO:0007669"/>
    <property type="project" value="UniProtKB-UniRule"/>
</dbReference>
<dbReference type="GO" id="GO:0004644">
    <property type="term" value="F:phosphoribosylglycinamide formyltransferase activity"/>
    <property type="evidence" value="ECO:0007669"/>
    <property type="project" value="InterPro"/>
</dbReference>
<dbReference type="GO" id="GO:0006189">
    <property type="term" value="P:'de novo' IMP biosynthetic process"/>
    <property type="evidence" value="ECO:0007669"/>
    <property type="project" value="UniProtKB-UniRule"/>
</dbReference>
<dbReference type="FunFam" id="3.30.1490.20:FF:000013">
    <property type="entry name" value="Formate-dependent phosphoribosylglycinamide formyltransferase"/>
    <property type="match status" value="1"/>
</dbReference>
<dbReference type="FunFam" id="3.30.470.20:FF:000027">
    <property type="entry name" value="Formate-dependent phosphoribosylglycinamide formyltransferase"/>
    <property type="match status" value="1"/>
</dbReference>
<dbReference type="FunFam" id="3.40.50.20:FF:000007">
    <property type="entry name" value="Formate-dependent phosphoribosylglycinamide formyltransferase"/>
    <property type="match status" value="1"/>
</dbReference>
<dbReference type="Gene3D" id="3.40.50.20">
    <property type="match status" value="1"/>
</dbReference>
<dbReference type="Gene3D" id="3.30.1490.20">
    <property type="entry name" value="ATP-grasp fold, A domain"/>
    <property type="match status" value="1"/>
</dbReference>
<dbReference type="Gene3D" id="3.30.470.20">
    <property type="entry name" value="ATP-grasp fold, B domain"/>
    <property type="match status" value="1"/>
</dbReference>
<dbReference type="HAMAP" id="MF_01643">
    <property type="entry name" value="PurT"/>
    <property type="match status" value="1"/>
</dbReference>
<dbReference type="InterPro" id="IPR011761">
    <property type="entry name" value="ATP-grasp"/>
</dbReference>
<dbReference type="InterPro" id="IPR003135">
    <property type="entry name" value="ATP-grasp_carboxylate-amine"/>
</dbReference>
<dbReference type="InterPro" id="IPR013815">
    <property type="entry name" value="ATP_grasp_subdomain_1"/>
</dbReference>
<dbReference type="InterPro" id="IPR016185">
    <property type="entry name" value="PreATP-grasp_dom_sf"/>
</dbReference>
<dbReference type="InterPro" id="IPR005862">
    <property type="entry name" value="PurT"/>
</dbReference>
<dbReference type="InterPro" id="IPR054350">
    <property type="entry name" value="PurT/PurK_preATP-grasp"/>
</dbReference>
<dbReference type="InterPro" id="IPR048740">
    <property type="entry name" value="PurT_C"/>
</dbReference>
<dbReference type="InterPro" id="IPR011054">
    <property type="entry name" value="Rudment_hybrid_motif"/>
</dbReference>
<dbReference type="NCBIfam" id="NF006766">
    <property type="entry name" value="PRK09288.1"/>
    <property type="match status" value="1"/>
</dbReference>
<dbReference type="NCBIfam" id="TIGR01142">
    <property type="entry name" value="purT"/>
    <property type="match status" value="1"/>
</dbReference>
<dbReference type="PANTHER" id="PTHR43055">
    <property type="entry name" value="FORMATE-DEPENDENT PHOSPHORIBOSYLGLYCINAMIDE FORMYLTRANSFERASE"/>
    <property type="match status" value="1"/>
</dbReference>
<dbReference type="PANTHER" id="PTHR43055:SF1">
    <property type="entry name" value="FORMATE-DEPENDENT PHOSPHORIBOSYLGLYCINAMIDE FORMYLTRANSFERASE"/>
    <property type="match status" value="1"/>
</dbReference>
<dbReference type="Pfam" id="PF02222">
    <property type="entry name" value="ATP-grasp"/>
    <property type="match status" value="1"/>
</dbReference>
<dbReference type="Pfam" id="PF21244">
    <property type="entry name" value="PurT_C"/>
    <property type="match status" value="1"/>
</dbReference>
<dbReference type="Pfam" id="PF22660">
    <property type="entry name" value="RS_preATP-grasp-like"/>
    <property type="match status" value="1"/>
</dbReference>
<dbReference type="SUPFAM" id="SSF56059">
    <property type="entry name" value="Glutathione synthetase ATP-binding domain-like"/>
    <property type="match status" value="1"/>
</dbReference>
<dbReference type="SUPFAM" id="SSF52440">
    <property type="entry name" value="PreATP-grasp domain"/>
    <property type="match status" value="1"/>
</dbReference>
<dbReference type="SUPFAM" id="SSF51246">
    <property type="entry name" value="Rudiment single hybrid motif"/>
    <property type="match status" value="1"/>
</dbReference>
<dbReference type="PROSITE" id="PS50975">
    <property type="entry name" value="ATP_GRASP"/>
    <property type="match status" value="1"/>
</dbReference>
<gene>
    <name evidence="1" type="primary">purT</name>
    <name type="ordered locus">SPA0986</name>
</gene>
<protein>
    <recommendedName>
        <fullName evidence="1">Formate-dependent phosphoribosylglycinamide formyltransferase</fullName>
        <ecNumber evidence="1">6.3.1.21</ecNumber>
    </recommendedName>
    <alternativeName>
        <fullName evidence="1">5'-phosphoribosylglycinamide transformylase 2</fullName>
    </alternativeName>
    <alternativeName>
        <fullName evidence="1">Formate-dependent GAR transformylase</fullName>
    </alternativeName>
    <alternativeName>
        <fullName evidence="1">GAR transformylase 2</fullName>
        <shortName evidence="1">GART 2</shortName>
    </alternativeName>
    <alternativeName>
        <fullName evidence="1">Non-folate glycinamide ribonucleotide transformylase</fullName>
    </alternativeName>
    <alternativeName>
        <fullName evidence="1">Phosphoribosylglycinamide formyltransferase 2</fullName>
    </alternativeName>
</protein>
<proteinExistence type="inferred from homology"/>
<evidence type="ECO:0000255" key="1">
    <source>
        <dbReference type="HAMAP-Rule" id="MF_01643"/>
    </source>
</evidence>
<keyword id="KW-0067">ATP-binding</keyword>
<keyword id="KW-0436">Ligase</keyword>
<keyword id="KW-0460">Magnesium</keyword>
<keyword id="KW-0479">Metal-binding</keyword>
<keyword id="KW-0547">Nucleotide-binding</keyword>
<keyword id="KW-0658">Purine biosynthesis</keyword>
<accession>Q5PIA0</accession>
<name>PURT_SALPA</name>
<organism>
    <name type="scientific">Salmonella paratyphi A (strain ATCC 9150 / SARB42)</name>
    <dbReference type="NCBI Taxonomy" id="295319"/>
    <lineage>
        <taxon>Bacteria</taxon>
        <taxon>Pseudomonadati</taxon>
        <taxon>Pseudomonadota</taxon>
        <taxon>Gammaproteobacteria</taxon>
        <taxon>Enterobacterales</taxon>
        <taxon>Enterobacteriaceae</taxon>
        <taxon>Salmonella</taxon>
    </lineage>
</organism>
<sequence>MTLLGTALRPAATRVMLLGAGELGKEVAIECQRLGIEVIAVDRYPDAPAMHVAHRSHVINMLDGEALRHVITEEKPHYIVPEIEAIATDTLRELEGEGLNVVPCARATQLTMNREGIRRLAAEELGLPTSTYRFADSEASFHDAVAAVGFPCIVKPVMSSSGKGQSFIRSAEQLAQAWEYAQQGGRAGAGRVIVEGVVKFDFEITLLTVSAVDGVHFCAPVGHRQQDGDYRESWQPQQMSELALKRAQEIARHVVLALGGHGLFGVELFVCGDEVIFSEVSPRPHDTGMVTLISQDLSEFALHVRAFLGMPIGAIRQYGPAASAVILPQLTSQNVTFDDVHAAVGAGVQVRLFGKPEIDGTRRLGVALATGENVEEAVIRAKKAASRVTVKG</sequence>
<reference key="1">
    <citation type="journal article" date="2004" name="Nat. Genet.">
        <title>Comparison of genome degradation in Paratyphi A and Typhi, human-restricted serovars of Salmonella enterica that cause typhoid.</title>
        <authorList>
            <person name="McClelland M."/>
            <person name="Sanderson K.E."/>
            <person name="Clifton S.W."/>
            <person name="Latreille P."/>
            <person name="Porwollik S."/>
            <person name="Sabo A."/>
            <person name="Meyer R."/>
            <person name="Bieri T."/>
            <person name="Ozersky P."/>
            <person name="McLellan M."/>
            <person name="Harkins C.R."/>
            <person name="Wang C."/>
            <person name="Nguyen C."/>
            <person name="Berghoff A."/>
            <person name="Elliott G."/>
            <person name="Kohlberg S."/>
            <person name="Strong C."/>
            <person name="Du F."/>
            <person name="Carter J."/>
            <person name="Kremizki C."/>
            <person name="Layman D."/>
            <person name="Leonard S."/>
            <person name="Sun H."/>
            <person name="Fulton L."/>
            <person name="Nash W."/>
            <person name="Miner T."/>
            <person name="Minx P."/>
            <person name="Delehaunty K."/>
            <person name="Fronick C."/>
            <person name="Magrini V."/>
            <person name="Nhan M."/>
            <person name="Warren W."/>
            <person name="Florea L."/>
            <person name="Spieth J."/>
            <person name="Wilson R.K."/>
        </authorList>
    </citation>
    <scope>NUCLEOTIDE SEQUENCE [LARGE SCALE GENOMIC DNA]</scope>
    <source>
        <strain>ATCC 9150 / SARB42</strain>
    </source>
</reference>
<feature type="chain" id="PRO_0000319225" description="Formate-dependent phosphoribosylglycinamide formyltransferase">
    <location>
        <begin position="1"/>
        <end position="392"/>
    </location>
</feature>
<feature type="domain" description="ATP-grasp" evidence="1">
    <location>
        <begin position="119"/>
        <end position="308"/>
    </location>
</feature>
<feature type="binding site" evidence="1">
    <location>
        <begin position="22"/>
        <end position="23"/>
    </location>
    <ligand>
        <name>N(1)-(5-phospho-beta-D-ribosyl)glycinamide</name>
        <dbReference type="ChEBI" id="CHEBI:143788"/>
    </ligand>
</feature>
<feature type="binding site" evidence="1">
    <location>
        <position position="82"/>
    </location>
    <ligand>
        <name>N(1)-(5-phospho-beta-D-ribosyl)glycinamide</name>
        <dbReference type="ChEBI" id="CHEBI:143788"/>
    </ligand>
</feature>
<feature type="binding site" evidence="1">
    <location>
        <position position="114"/>
    </location>
    <ligand>
        <name>ATP</name>
        <dbReference type="ChEBI" id="CHEBI:30616"/>
    </ligand>
</feature>
<feature type="binding site" evidence="1">
    <location>
        <position position="155"/>
    </location>
    <ligand>
        <name>ATP</name>
        <dbReference type="ChEBI" id="CHEBI:30616"/>
    </ligand>
</feature>
<feature type="binding site" evidence="1">
    <location>
        <begin position="160"/>
        <end position="165"/>
    </location>
    <ligand>
        <name>ATP</name>
        <dbReference type="ChEBI" id="CHEBI:30616"/>
    </ligand>
</feature>
<feature type="binding site" evidence="1">
    <location>
        <begin position="195"/>
        <end position="198"/>
    </location>
    <ligand>
        <name>ATP</name>
        <dbReference type="ChEBI" id="CHEBI:30616"/>
    </ligand>
</feature>
<feature type="binding site" evidence="1">
    <location>
        <position position="203"/>
    </location>
    <ligand>
        <name>ATP</name>
        <dbReference type="ChEBI" id="CHEBI:30616"/>
    </ligand>
</feature>
<feature type="binding site" evidence="1">
    <location>
        <position position="267"/>
    </location>
    <ligand>
        <name>Mg(2+)</name>
        <dbReference type="ChEBI" id="CHEBI:18420"/>
    </ligand>
</feature>
<feature type="binding site" evidence="1">
    <location>
        <position position="279"/>
    </location>
    <ligand>
        <name>Mg(2+)</name>
        <dbReference type="ChEBI" id="CHEBI:18420"/>
    </ligand>
</feature>
<feature type="binding site" evidence="1">
    <location>
        <position position="286"/>
    </location>
    <ligand>
        <name>N(1)-(5-phospho-beta-D-ribosyl)glycinamide</name>
        <dbReference type="ChEBI" id="CHEBI:143788"/>
    </ligand>
</feature>
<feature type="binding site" evidence="1">
    <location>
        <position position="355"/>
    </location>
    <ligand>
        <name>N(1)-(5-phospho-beta-D-ribosyl)glycinamide</name>
        <dbReference type="ChEBI" id="CHEBI:143788"/>
    </ligand>
</feature>
<feature type="binding site" evidence="1">
    <location>
        <begin position="362"/>
        <end position="363"/>
    </location>
    <ligand>
        <name>N(1)-(5-phospho-beta-D-ribosyl)glycinamide</name>
        <dbReference type="ChEBI" id="CHEBI:143788"/>
    </ligand>
</feature>
<comment type="function">
    <text evidence="1">Involved in the de novo purine biosynthesis. Catalyzes the transfer of formate to 5-phospho-ribosyl-glycinamide (GAR), producing 5-phospho-ribosyl-N-formylglycinamide (FGAR). Formate is provided by PurU via hydrolysis of 10-formyl-tetrahydrofolate.</text>
</comment>
<comment type="catalytic activity">
    <reaction evidence="1">
        <text>N(1)-(5-phospho-beta-D-ribosyl)glycinamide + formate + ATP = N(2)-formyl-N(1)-(5-phospho-beta-D-ribosyl)glycinamide + ADP + phosphate + H(+)</text>
        <dbReference type="Rhea" id="RHEA:24829"/>
        <dbReference type="ChEBI" id="CHEBI:15378"/>
        <dbReference type="ChEBI" id="CHEBI:15740"/>
        <dbReference type="ChEBI" id="CHEBI:30616"/>
        <dbReference type="ChEBI" id="CHEBI:43474"/>
        <dbReference type="ChEBI" id="CHEBI:143788"/>
        <dbReference type="ChEBI" id="CHEBI:147286"/>
        <dbReference type="ChEBI" id="CHEBI:456216"/>
        <dbReference type="EC" id="6.3.1.21"/>
    </reaction>
    <physiologicalReaction direction="left-to-right" evidence="1">
        <dbReference type="Rhea" id="RHEA:24830"/>
    </physiologicalReaction>
</comment>
<comment type="pathway">
    <text evidence="1">Purine metabolism; IMP biosynthesis via de novo pathway; N(2)-formyl-N(1)-(5-phospho-D-ribosyl)glycinamide from N(1)-(5-phospho-D-ribosyl)glycinamide (formate route): step 1/1.</text>
</comment>
<comment type="subunit">
    <text evidence="1">Homodimer.</text>
</comment>
<comment type="similarity">
    <text evidence="1">Belongs to the PurK/PurT family.</text>
</comment>